<reference key="1">
    <citation type="journal article" date="2004" name="Proc. Natl. Acad. Sci. U.S.A.">
        <title>Genomic plasticity of the causative agent of melioidosis, Burkholderia pseudomallei.</title>
        <authorList>
            <person name="Holden M.T.G."/>
            <person name="Titball R.W."/>
            <person name="Peacock S.J."/>
            <person name="Cerdeno-Tarraga A.-M."/>
            <person name="Atkins T."/>
            <person name="Crossman L.C."/>
            <person name="Pitt T."/>
            <person name="Churcher C."/>
            <person name="Mungall K.L."/>
            <person name="Bentley S.D."/>
            <person name="Sebaihia M."/>
            <person name="Thomson N.R."/>
            <person name="Bason N."/>
            <person name="Beacham I.R."/>
            <person name="Brooks K."/>
            <person name="Brown K.A."/>
            <person name="Brown N.F."/>
            <person name="Challis G.L."/>
            <person name="Cherevach I."/>
            <person name="Chillingworth T."/>
            <person name="Cronin A."/>
            <person name="Crossett B."/>
            <person name="Davis P."/>
            <person name="DeShazer D."/>
            <person name="Feltwell T."/>
            <person name="Fraser A."/>
            <person name="Hance Z."/>
            <person name="Hauser H."/>
            <person name="Holroyd S."/>
            <person name="Jagels K."/>
            <person name="Keith K.E."/>
            <person name="Maddison M."/>
            <person name="Moule S."/>
            <person name="Price C."/>
            <person name="Quail M.A."/>
            <person name="Rabbinowitsch E."/>
            <person name="Rutherford K."/>
            <person name="Sanders M."/>
            <person name="Simmonds M."/>
            <person name="Songsivilai S."/>
            <person name="Stevens K."/>
            <person name="Tumapa S."/>
            <person name="Vesaratchavest M."/>
            <person name="Whitehead S."/>
            <person name="Yeats C."/>
            <person name="Barrell B.G."/>
            <person name="Oyston P.C.F."/>
            <person name="Parkhill J."/>
        </authorList>
    </citation>
    <scope>NUCLEOTIDE SEQUENCE [LARGE SCALE GENOMIC DNA]</scope>
    <source>
        <strain>K96243</strain>
    </source>
</reference>
<gene>
    <name evidence="1" type="primary">rplK</name>
    <name type="ordered locus">BPSL3225</name>
</gene>
<dbReference type="EMBL" id="BX571965">
    <property type="protein sequence ID" value="CAH37236.1"/>
    <property type="molecule type" value="Genomic_DNA"/>
</dbReference>
<dbReference type="RefSeq" id="WP_004198368.1">
    <property type="nucleotide sequence ID" value="NZ_CP009538.1"/>
</dbReference>
<dbReference type="RefSeq" id="YP_109819.1">
    <property type="nucleotide sequence ID" value="NC_006350.1"/>
</dbReference>
<dbReference type="SMR" id="Q63PZ9"/>
<dbReference type="STRING" id="272560.BPSL3225"/>
<dbReference type="GeneID" id="93061845"/>
<dbReference type="KEGG" id="bps:BPSL3225"/>
<dbReference type="PATRIC" id="fig|272560.51.peg.2013"/>
<dbReference type="eggNOG" id="COG0080">
    <property type="taxonomic scope" value="Bacteria"/>
</dbReference>
<dbReference type="Proteomes" id="UP000000605">
    <property type="component" value="Chromosome 1"/>
</dbReference>
<dbReference type="GO" id="GO:0022625">
    <property type="term" value="C:cytosolic large ribosomal subunit"/>
    <property type="evidence" value="ECO:0007669"/>
    <property type="project" value="TreeGrafter"/>
</dbReference>
<dbReference type="GO" id="GO:0070180">
    <property type="term" value="F:large ribosomal subunit rRNA binding"/>
    <property type="evidence" value="ECO:0007669"/>
    <property type="project" value="UniProtKB-UniRule"/>
</dbReference>
<dbReference type="GO" id="GO:0003735">
    <property type="term" value="F:structural constituent of ribosome"/>
    <property type="evidence" value="ECO:0007669"/>
    <property type="project" value="InterPro"/>
</dbReference>
<dbReference type="GO" id="GO:0006412">
    <property type="term" value="P:translation"/>
    <property type="evidence" value="ECO:0007669"/>
    <property type="project" value="UniProtKB-UniRule"/>
</dbReference>
<dbReference type="CDD" id="cd00349">
    <property type="entry name" value="Ribosomal_L11"/>
    <property type="match status" value="1"/>
</dbReference>
<dbReference type="FunFam" id="1.10.10.250:FF:000001">
    <property type="entry name" value="50S ribosomal protein L11"/>
    <property type="match status" value="1"/>
</dbReference>
<dbReference type="FunFam" id="3.30.1550.10:FF:000001">
    <property type="entry name" value="50S ribosomal protein L11"/>
    <property type="match status" value="1"/>
</dbReference>
<dbReference type="Gene3D" id="1.10.10.250">
    <property type="entry name" value="Ribosomal protein L11, C-terminal domain"/>
    <property type="match status" value="1"/>
</dbReference>
<dbReference type="Gene3D" id="3.30.1550.10">
    <property type="entry name" value="Ribosomal protein L11/L12, N-terminal domain"/>
    <property type="match status" value="1"/>
</dbReference>
<dbReference type="HAMAP" id="MF_00736">
    <property type="entry name" value="Ribosomal_uL11"/>
    <property type="match status" value="1"/>
</dbReference>
<dbReference type="InterPro" id="IPR000911">
    <property type="entry name" value="Ribosomal_uL11"/>
</dbReference>
<dbReference type="InterPro" id="IPR006519">
    <property type="entry name" value="Ribosomal_uL11_bac-typ"/>
</dbReference>
<dbReference type="InterPro" id="IPR020783">
    <property type="entry name" value="Ribosomal_uL11_C"/>
</dbReference>
<dbReference type="InterPro" id="IPR036769">
    <property type="entry name" value="Ribosomal_uL11_C_sf"/>
</dbReference>
<dbReference type="InterPro" id="IPR020785">
    <property type="entry name" value="Ribosomal_uL11_CS"/>
</dbReference>
<dbReference type="InterPro" id="IPR020784">
    <property type="entry name" value="Ribosomal_uL11_N"/>
</dbReference>
<dbReference type="InterPro" id="IPR036796">
    <property type="entry name" value="Ribosomal_uL11_N_sf"/>
</dbReference>
<dbReference type="NCBIfam" id="TIGR01632">
    <property type="entry name" value="L11_bact"/>
    <property type="match status" value="1"/>
</dbReference>
<dbReference type="PANTHER" id="PTHR11661">
    <property type="entry name" value="60S RIBOSOMAL PROTEIN L12"/>
    <property type="match status" value="1"/>
</dbReference>
<dbReference type="PANTHER" id="PTHR11661:SF1">
    <property type="entry name" value="LARGE RIBOSOMAL SUBUNIT PROTEIN UL11M"/>
    <property type="match status" value="1"/>
</dbReference>
<dbReference type="Pfam" id="PF00298">
    <property type="entry name" value="Ribosomal_L11"/>
    <property type="match status" value="1"/>
</dbReference>
<dbReference type="Pfam" id="PF03946">
    <property type="entry name" value="Ribosomal_L11_N"/>
    <property type="match status" value="1"/>
</dbReference>
<dbReference type="SMART" id="SM00649">
    <property type="entry name" value="RL11"/>
    <property type="match status" value="1"/>
</dbReference>
<dbReference type="SUPFAM" id="SSF54747">
    <property type="entry name" value="Ribosomal L11/L12e N-terminal domain"/>
    <property type="match status" value="1"/>
</dbReference>
<dbReference type="SUPFAM" id="SSF46906">
    <property type="entry name" value="Ribosomal protein L11, C-terminal domain"/>
    <property type="match status" value="1"/>
</dbReference>
<dbReference type="PROSITE" id="PS00359">
    <property type="entry name" value="RIBOSOMAL_L11"/>
    <property type="match status" value="1"/>
</dbReference>
<accession>Q63PZ9</accession>
<sequence length="143" mass="14959">MAKKIVGFIKLQIPAGKANPSPPVGPALGQRGLNIMEFCKAFNAQTQGMEPGLPVPVVITAYADKSFTFVMKTPPATVLIKKAAKVDKGSSKPHTDKVGKITRAQAEEIAKTKMPDLTAADLDAAVRTIAGSARSMGITVEGV</sequence>
<evidence type="ECO:0000255" key="1">
    <source>
        <dbReference type="HAMAP-Rule" id="MF_00736"/>
    </source>
</evidence>
<evidence type="ECO:0000305" key="2"/>
<organism>
    <name type="scientific">Burkholderia pseudomallei (strain K96243)</name>
    <dbReference type="NCBI Taxonomy" id="272560"/>
    <lineage>
        <taxon>Bacteria</taxon>
        <taxon>Pseudomonadati</taxon>
        <taxon>Pseudomonadota</taxon>
        <taxon>Betaproteobacteria</taxon>
        <taxon>Burkholderiales</taxon>
        <taxon>Burkholderiaceae</taxon>
        <taxon>Burkholderia</taxon>
        <taxon>pseudomallei group</taxon>
    </lineage>
</organism>
<feature type="chain" id="PRO_0000104263" description="Large ribosomal subunit protein uL11">
    <location>
        <begin position="1"/>
        <end position="143"/>
    </location>
</feature>
<proteinExistence type="inferred from homology"/>
<comment type="function">
    <text evidence="1">Forms part of the ribosomal stalk which helps the ribosome interact with GTP-bound translation factors.</text>
</comment>
<comment type="subunit">
    <text evidence="1">Part of the ribosomal stalk of the 50S ribosomal subunit. Interacts with L10 and the large rRNA to form the base of the stalk. L10 forms an elongated spine to which L12 dimers bind in a sequential fashion forming a multimeric L10(L12)X complex.</text>
</comment>
<comment type="PTM">
    <text evidence="1">One or more lysine residues are methylated.</text>
</comment>
<comment type="similarity">
    <text evidence="1">Belongs to the universal ribosomal protein uL11 family.</text>
</comment>
<protein>
    <recommendedName>
        <fullName evidence="1">Large ribosomal subunit protein uL11</fullName>
    </recommendedName>
    <alternativeName>
        <fullName evidence="2">50S ribosomal protein L11</fullName>
    </alternativeName>
</protein>
<keyword id="KW-0488">Methylation</keyword>
<keyword id="KW-1185">Reference proteome</keyword>
<keyword id="KW-0687">Ribonucleoprotein</keyword>
<keyword id="KW-0689">Ribosomal protein</keyword>
<keyword id="KW-0694">RNA-binding</keyword>
<keyword id="KW-0699">rRNA-binding</keyword>
<name>RL11_BURPS</name>